<reference key="1">
    <citation type="journal article" date="2010" name="Genome Biol. Evol.">
        <title>Continuing evolution of Burkholderia mallei through genome reduction and large-scale rearrangements.</title>
        <authorList>
            <person name="Losada L."/>
            <person name="Ronning C.M."/>
            <person name="DeShazer D."/>
            <person name="Woods D."/>
            <person name="Fedorova N."/>
            <person name="Kim H.S."/>
            <person name="Shabalina S.A."/>
            <person name="Pearson T.R."/>
            <person name="Brinkac L."/>
            <person name="Tan P."/>
            <person name="Nandi T."/>
            <person name="Crabtree J."/>
            <person name="Badger J."/>
            <person name="Beckstrom-Sternberg S."/>
            <person name="Saqib M."/>
            <person name="Schutzer S.E."/>
            <person name="Keim P."/>
            <person name="Nierman W.C."/>
        </authorList>
    </citation>
    <scope>NUCLEOTIDE SEQUENCE [LARGE SCALE GENOMIC DNA]</scope>
    <source>
        <strain>668</strain>
    </source>
</reference>
<proteinExistence type="inferred from homology"/>
<organism>
    <name type="scientific">Burkholderia pseudomallei (strain 668)</name>
    <dbReference type="NCBI Taxonomy" id="320373"/>
    <lineage>
        <taxon>Bacteria</taxon>
        <taxon>Pseudomonadati</taxon>
        <taxon>Pseudomonadota</taxon>
        <taxon>Betaproteobacteria</taxon>
        <taxon>Burkholderiales</taxon>
        <taxon>Burkholderiaceae</taxon>
        <taxon>Burkholderia</taxon>
        <taxon>pseudomallei group</taxon>
    </lineage>
</organism>
<accession>A3NAL8</accession>
<comment type="function">
    <text evidence="1">Involved in the biosynthesis of isopentenyl diphosphate (IPP) and dimethylallyl diphosphate (DMAPP), two major building blocks of isoprenoid compounds. Catalyzes the conversion of 4-diphosphocytidyl-2-C-methyl-D-erythritol 2-phosphate (CDP-ME2P) to 2-C-methyl-D-erythritol 2,4-cyclodiphosphate (ME-CPP) with a corresponding release of cytidine 5-monophosphate (CMP).</text>
</comment>
<comment type="catalytic activity">
    <reaction evidence="1">
        <text>4-CDP-2-C-methyl-D-erythritol 2-phosphate = 2-C-methyl-D-erythritol 2,4-cyclic diphosphate + CMP</text>
        <dbReference type="Rhea" id="RHEA:23864"/>
        <dbReference type="ChEBI" id="CHEBI:57919"/>
        <dbReference type="ChEBI" id="CHEBI:58483"/>
        <dbReference type="ChEBI" id="CHEBI:60377"/>
        <dbReference type="EC" id="4.6.1.12"/>
    </reaction>
</comment>
<comment type="cofactor">
    <cofactor evidence="1">
        <name>a divalent metal cation</name>
        <dbReference type="ChEBI" id="CHEBI:60240"/>
    </cofactor>
    <text evidence="1">Binds 1 divalent metal cation per subunit.</text>
</comment>
<comment type="pathway">
    <text evidence="1">Isoprenoid biosynthesis; isopentenyl diphosphate biosynthesis via DXP pathway; isopentenyl diphosphate from 1-deoxy-D-xylulose 5-phosphate: step 4/6.</text>
</comment>
<comment type="subunit">
    <text evidence="1">Homotrimer.</text>
</comment>
<comment type="similarity">
    <text evidence="1">Belongs to the IspF family.</text>
</comment>
<evidence type="ECO:0000255" key="1">
    <source>
        <dbReference type="HAMAP-Rule" id="MF_00107"/>
    </source>
</evidence>
<dbReference type="EC" id="4.6.1.12" evidence="1"/>
<dbReference type="EMBL" id="CP000570">
    <property type="protein sequence ID" value="ABN83348.1"/>
    <property type="molecule type" value="Genomic_DNA"/>
</dbReference>
<dbReference type="RefSeq" id="WP_004191369.1">
    <property type="nucleotide sequence ID" value="NC_009074.1"/>
</dbReference>
<dbReference type="SMR" id="A3NAL8"/>
<dbReference type="GeneID" id="93060627"/>
<dbReference type="KEGG" id="bpd:BURPS668_2357"/>
<dbReference type="HOGENOM" id="CLU_084630_2_0_4"/>
<dbReference type="UniPathway" id="UPA00056">
    <property type="reaction ID" value="UER00095"/>
</dbReference>
<dbReference type="GO" id="GO:0008685">
    <property type="term" value="F:2-C-methyl-D-erythritol 2,4-cyclodiphosphate synthase activity"/>
    <property type="evidence" value="ECO:0007669"/>
    <property type="project" value="UniProtKB-UniRule"/>
</dbReference>
<dbReference type="GO" id="GO:0046872">
    <property type="term" value="F:metal ion binding"/>
    <property type="evidence" value="ECO:0007669"/>
    <property type="project" value="UniProtKB-KW"/>
</dbReference>
<dbReference type="GO" id="GO:0019288">
    <property type="term" value="P:isopentenyl diphosphate biosynthetic process, methylerythritol 4-phosphate pathway"/>
    <property type="evidence" value="ECO:0007669"/>
    <property type="project" value="UniProtKB-UniRule"/>
</dbReference>
<dbReference type="GO" id="GO:0016114">
    <property type="term" value="P:terpenoid biosynthetic process"/>
    <property type="evidence" value="ECO:0007669"/>
    <property type="project" value="InterPro"/>
</dbReference>
<dbReference type="CDD" id="cd00554">
    <property type="entry name" value="MECDP_synthase"/>
    <property type="match status" value="1"/>
</dbReference>
<dbReference type="FunFam" id="3.30.1330.50:FF:000001">
    <property type="entry name" value="2-C-methyl-D-erythritol 2,4-cyclodiphosphate synthase"/>
    <property type="match status" value="1"/>
</dbReference>
<dbReference type="Gene3D" id="3.30.1330.50">
    <property type="entry name" value="2-C-methyl-D-erythritol 2,4-cyclodiphosphate synthase"/>
    <property type="match status" value="1"/>
</dbReference>
<dbReference type="HAMAP" id="MF_00107">
    <property type="entry name" value="IspF"/>
    <property type="match status" value="1"/>
</dbReference>
<dbReference type="InterPro" id="IPR003526">
    <property type="entry name" value="MECDP_synthase"/>
</dbReference>
<dbReference type="InterPro" id="IPR020555">
    <property type="entry name" value="MECDP_synthase_CS"/>
</dbReference>
<dbReference type="InterPro" id="IPR036571">
    <property type="entry name" value="MECDP_synthase_sf"/>
</dbReference>
<dbReference type="NCBIfam" id="TIGR00151">
    <property type="entry name" value="ispF"/>
    <property type="match status" value="1"/>
</dbReference>
<dbReference type="PANTHER" id="PTHR43181">
    <property type="entry name" value="2-C-METHYL-D-ERYTHRITOL 2,4-CYCLODIPHOSPHATE SYNTHASE, CHLOROPLASTIC"/>
    <property type="match status" value="1"/>
</dbReference>
<dbReference type="PANTHER" id="PTHR43181:SF1">
    <property type="entry name" value="2-C-METHYL-D-ERYTHRITOL 2,4-CYCLODIPHOSPHATE SYNTHASE, CHLOROPLASTIC"/>
    <property type="match status" value="1"/>
</dbReference>
<dbReference type="Pfam" id="PF02542">
    <property type="entry name" value="YgbB"/>
    <property type="match status" value="1"/>
</dbReference>
<dbReference type="SUPFAM" id="SSF69765">
    <property type="entry name" value="IpsF-like"/>
    <property type="match status" value="1"/>
</dbReference>
<dbReference type="PROSITE" id="PS01350">
    <property type="entry name" value="ISPF"/>
    <property type="match status" value="1"/>
</dbReference>
<keyword id="KW-0414">Isoprene biosynthesis</keyword>
<keyword id="KW-0456">Lyase</keyword>
<keyword id="KW-0479">Metal-binding</keyword>
<sequence length="162" mass="17175">MDFRIGQGYDVHQLVPGRPLIIGGVTIPYERGLLGHSDADVLLHAITDALFGAAALGDIGRHFSDTDPRFKGADSRALLRECASRVAQAGFAIRNVDSTIIAQAPKLAPHIDAMRANIAADLDLPLDRVNVKAKTNEKLGYLGRGEGIEAQAAALVVREAAA</sequence>
<name>ISPF_BURP6</name>
<feature type="chain" id="PRO_1000022816" description="2-C-methyl-D-erythritol 2,4-cyclodiphosphate synthase">
    <location>
        <begin position="1"/>
        <end position="162"/>
    </location>
</feature>
<feature type="binding site" evidence="1">
    <location>
        <begin position="10"/>
        <end position="12"/>
    </location>
    <ligand>
        <name>4-CDP-2-C-methyl-D-erythritol 2-phosphate</name>
        <dbReference type="ChEBI" id="CHEBI:57919"/>
    </ligand>
</feature>
<feature type="binding site" evidence="1">
    <location>
        <position position="10"/>
    </location>
    <ligand>
        <name>a divalent metal cation</name>
        <dbReference type="ChEBI" id="CHEBI:60240"/>
    </ligand>
</feature>
<feature type="binding site" evidence="1">
    <location>
        <position position="12"/>
    </location>
    <ligand>
        <name>a divalent metal cation</name>
        <dbReference type="ChEBI" id="CHEBI:60240"/>
    </ligand>
</feature>
<feature type="binding site" evidence="1">
    <location>
        <begin position="36"/>
        <end position="37"/>
    </location>
    <ligand>
        <name>4-CDP-2-C-methyl-D-erythritol 2-phosphate</name>
        <dbReference type="ChEBI" id="CHEBI:57919"/>
    </ligand>
</feature>
<feature type="binding site" evidence="1">
    <location>
        <position position="44"/>
    </location>
    <ligand>
        <name>a divalent metal cation</name>
        <dbReference type="ChEBI" id="CHEBI:60240"/>
    </ligand>
</feature>
<feature type="binding site" evidence="1">
    <location>
        <begin position="58"/>
        <end position="60"/>
    </location>
    <ligand>
        <name>4-CDP-2-C-methyl-D-erythritol 2-phosphate</name>
        <dbReference type="ChEBI" id="CHEBI:57919"/>
    </ligand>
</feature>
<feature type="binding site" evidence="1">
    <location>
        <begin position="63"/>
        <end position="67"/>
    </location>
    <ligand>
        <name>4-CDP-2-C-methyl-D-erythritol 2-phosphate</name>
        <dbReference type="ChEBI" id="CHEBI:57919"/>
    </ligand>
</feature>
<feature type="binding site" evidence="1">
    <location>
        <position position="144"/>
    </location>
    <ligand>
        <name>4-CDP-2-C-methyl-D-erythritol 2-phosphate</name>
        <dbReference type="ChEBI" id="CHEBI:57919"/>
    </ligand>
</feature>
<feature type="site" description="Transition state stabilizer" evidence="1">
    <location>
        <position position="36"/>
    </location>
</feature>
<feature type="site" description="Transition state stabilizer" evidence="1">
    <location>
        <position position="135"/>
    </location>
</feature>
<protein>
    <recommendedName>
        <fullName evidence="1">2-C-methyl-D-erythritol 2,4-cyclodiphosphate synthase</fullName>
        <shortName evidence="1">MECDP-synthase</shortName>
        <shortName evidence="1">MECPP-synthase</shortName>
        <shortName evidence="1">MECPS</shortName>
        <ecNumber evidence="1">4.6.1.12</ecNumber>
    </recommendedName>
</protein>
<gene>
    <name evidence="1" type="primary">ispF</name>
    <name type="ordered locus">BURPS668_2357</name>
</gene>